<name>SEGE_BPT4</name>
<keyword id="KW-0255">Endonuclease</keyword>
<keyword id="KW-0378">Hydrolase</keyword>
<keyword id="KW-0460">Magnesium</keyword>
<keyword id="KW-0540">Nuclease</keyword>
<keyword id="KW-1185">Reference proteome</keyword>
<accession>P18060</accession>
<accession>Q9T0T9</accession>
<proteinExistence type="predicted"/>
<organismHost>
    <name type="scientific">Escherichia coli</name>
    <dbReference type="NCBI Taxonomy" id="562"/>
</organismHost>
<organism>
    <name type="scientific">Enterobacteria phage T4</name>
    <name type="common">Bacteriophage T4</name>
    <dbReference type="NCBI Taxonomy" id="10665"/>
    <lineage>
        <taxon>Viruses</taxon>
        <taxon>Duplodnaviria</taxon>
        <taxon>Heunggongvirae</taxon>
        <taxon>Uroviricota</taxon>
        <taxon>Caudoviricetes</taxon>
        <taxon>Straboviridae</taxon>
        <taxon>Tevenvirinae</taxon>
        <taxon>Tequatrovirus</taxon>
    </lineage>
</organism>
<protein>
    <recommendedName>
        <fullName>Putative endonuclease segE</fullName>
        <ecNumber>3.1.-.-</ecNumber>
    </recommendedName>
    <alternativeName>
        <fullName>Endodeoxyribonuclease segE</fullName>
    </alternativeName>
</protein>
<dbReference type="EC" id="3.1.-.-"/>
<dbReference type="EMBL" id="X14869">
    <property type="protein sequence ID" value="CAA33013.1"/>
    <property type="molecule type" value="Genomic_DNA"/>
</dbReference>
<dbReference type="EMBL" id="AF158101">
    <property type="protein sequence ID" value="AAD42658.1"/>
    <property type="molecule type" value="Genomic_DNA"/>
</dbReference>
<dbReference type="PIR" id="JQ0565">
    <property type="entry name" value="S10497"/>
</dbReference>
<dbReference type="RefSeq" id="NP_049795.1">
    <property type="nucleotide sequence ID" value="NC_000866.4"/>
</dbReference>
<dbReference type="SMR" id="P18060"/>
<dbReference type="REBASE" id="3006">
    <property type="entry name" value="F-TevII"/>
</dbReference>
<dbReference type="GeneID" id="1258802"/>
<dbReference type="KEGG" id="vg:1258802"/>
<dbReference type="OrthoDB" id="7844at10239"/>
<dbReference type="Proteomes" id="UP000009087">
    <property type="component" value="Segment"/>
</dbReference>
<dbReference type="GO" id="GO:0004519">
    <property type="term" value="F:endonuclease activity"/>
    <property type="evidence" value="ECO:0007669"/>
    <property type="project" value="UniProtKB-KW"/>
</dbReference>
<dbReference type="CDD" id="cd10444">
    <property type="entry name" value="GIY-YIG_SegABCDEFG"/>
    <property type="match status" value="1"/>
</dbReference>
<dbReference type="Gene3D" id="3.40.1440.10">
    <property type="entry name" value="GIY-YIG endonuclease"/>
    <property type="match status" value="1"/>
</dbReference>
<dbReference type="InterPro" id="IPR000305">
    <property type="entry name" value="GIY-YIG_endonuc"/>
</dbReference>
<dbReference type="InterPro" id="IPR035901">
    <property type="entry name" value="GIY-YIG_endonuc_sf"/>
</dbReference>
<dbReference type="InterPro" id="IPR045566">
    <property type="entry name" value="SegE-like_GIY-YIG"/>
</dbReference>
<dbReference type="Pfam" id="PF19835">
    <property type="entry name" value="SegE_GIY-YIG"/>
    <property type="match status" value="1"/>
</dbReference>
<dbReference type="SMART" id="SM00465">
    <property type="entry name" value="GIYc"/>
    <property type="match status" value="1"/>
</dbReference>
<dbReference type="SUPFAM" id="SSF82771">
    <property type="entry name" value="GIY-YIG endonuclease"/>
    <property type="match status" value="1"/>
</dbReference>
<dbReference type="PROSITE" id="PS50164">
    <property type="entry name" value="GIY_YIG"/>
    <property type="match status" value="1"/>
</dbReference>
<evidence type="ECO:0000250" key="1"/>
<evidence type="ECO:0000255" key="2">
    <source>
        <dbReference type="PROSITE-ProRule" id="PRU00977"/>
    </source>
</evidence>
<evidence type="ECO:0000305" key="3"/>
<reference key="1">
    <citation type="journal article" date="1990" name="Nucleic Acids Res.">
        <title>The nucleotide sequence of the region of bacteriophage T4 inh(lip)-hoc genes.</title>
        <authorList>
            <person name="Kaliman A.V."/>
            <person name="Khasanova M.A."/>
            <person name="Kryukov V.M."/>
            <person name="Tanyashin V.I."/>
            <person name="Bayev A.A."/>
        </authorList>
    </citation>
    <scope>NUCLEOTIDE SEQUENCE [GENOMIC DNA]</scope>
</reference>
<reference key="2">
    <citation type="journal article" date="2003" name="Microbiol. Mol. Biol. Rev.">
        <title>Bacteriophage T4 genome.</title>
        <authorList>
            <person name="Miller E.S."/>
            <person name="Kutter E."/>
            <person name="Mosig G."/>
            <person name="Arisaka F."/>
            <person name="Kunisawa T."/>
            <person name="Ruger W."/>
        </authorList>
    </citation>
    <scope>NUCLEOTIDE SEQUENCE [LARGE SCALE GENOMIC DNA]</scope>
</reference>
<reference key="3">
    <citation type="journal article" date="1992" name="Proc. Natl. Acad. Sci. U.S.A.">
        <title>Identification of a family of bacteriophage T4 genes encoding proteins similar to those present in group I introns of fungi and phage.</title>
        <authorList>
            <person name="Sharma M."/>
            <person name="Ellis R.L."/>
            <person name="Hinton D.M."/>
        </authorList>
    </citation>
    <scope>IDENTIFICATION</scope>
    <scope>POSSIBLE FUNCTION</scope>
</reference>
<comment type="function">
    <text>Probably involved in the movement of the endonuclease-encoding DNA.</text>
</comment>
<comment type="cofactor">
    <cofactor evidence="1">
        <name>Mg(2+)</name>
        <dbReference type="ChEBI" id="CHEBI:18420"/>
    </cofactor>
</comment>
<comment type="similarity">
    <text evidence="3">To endonucleases of group I introns of fungi and phage.</text>
</comment>
<feature type="chain" id="PRO_0000164984" description="Putative endonuclease segE">
    <location>
        <begin position="1"/>
        <end position="205"/>
    </location>
</feature>
<feature type="domain" description="GIY-YIG" evidence="2">
    <location>
        <begin position="1"/>
        <end position="84"/>
    </location>
</feature>
<feature type="sequence conflict" description="In Ref. 1; CAA33013." evidence="3" ref="1">
    <original>G</original>
    <variation>S</variation>
    <location>
        <position position="87"/>
    </location>
</feature>
<feature type="sequence conflict" description="In Ref. 1; CAA33013." evidence="3" ref="1">
    <original>T</original>
    <variation>S</variation>
    <location>
        <position position="127"/>
    </location>
</feature>
<feature type="sequence conflict" description="In Ref. 1; CAA33013." evidence="3" ref="1">
    <original>G</original>
    <variation>R</variation>
    <location>
        <position position="135"/>
    </location>
</feature>
<gene>
    <name type="primary">segE</name>
    <name type="synonym">hoc.2</name>
</gene>
<sequence>MYHFVYETTNLINGKKYIGKHSTDDLNDGYLGSGKAIQQAIKKYGENNFSRTILKEFKTSEEAYMYEEEIITPELIKSKNYYNMKPGGIGGIVMTTDVIAKMKESSAKRFENSPGTVLGKTCYTNGTKNIFIKPGELVPEGFVKGMVHPNRKSRKGCKVKPTTTGTFWVNNGAINKLIQPDGIIPDGFIKGRLMKRDSKGKFSKA</sequence>